<keyword id="KW-0007">Acetylation</keyword>
<keyword id="KW-0009">Actin-binding</keyword>
<keyword id="KW-0965">Cell junction</keyword>
<keyword id="KW-1003">Cell membrane</keyword>
<keyword id="KW-0966">Cell projection</keyword>
<keyword id="KW-0153">Cholesterol metabolism</keyword>
<keyword id="KW-0963">Cytoplasm</keyword>
<keyword id="KW-0206">Cytoskeleton</keyword>
<keyword id="KW-0440">LIM domain</keyword>
<keyword id="KW-0443">Lipid metabolism</keyword>
<keyword id="KW-0472">Membrane</keyword>
<keyword id="KW-0479">Metal-binding</keyword>
<keyword id="KW-0597">Phosphoprotein</keyword>
<keyword id="KW-1185">Reference proteome</keyword>
<keyword id="KW-0753">Steroid metabolism</keyword>
<keyword id="KW-1207">Sterol metabolism</keyword>
<keyword id="KW-0832">Ubl conjugation</keyword>
<keyword id="KW-0862">Zinc</keyword>
<proteinExistence type="evidence at protein level"/>
<gene>
    <name evidence="6" type="primary">Lima1</name>
    <name type="synonym">eplin</name>
</gene>
<dbReference type="EMBL" id="AABR07058874">
    <property type="status" value="NOT_ANNOTATED_CDS"/>
    <property type="molecule type" value="Genomic_DNA"/>
</dbReference>
<dbReference type="EMBL" id="AABR07058875">
    <property type="status" value="NOT_ANNOTATED_CDS"/>
    <property type="molecule type" value="Genomic_DNA"/>
</dbReference>
<dbReference type="EMBL" id="AABR07058876">
    <property type="status" value="NOT_ANNOTATED_CDS"/>
    <property type="molecule type" value="Genomic_DNA"/>
</dbReference>
<dbReference type="EMBL" id="AABR07058877">
    <property type="status" value="NOT_ANNOTATED_CDS"/>
    <property type="molecule type" value="Genomic_DNA"/>
</dbReference>
<dbReference type="EMBL" id="AABR07058878">
    <property type="status" value="NOT_ANNOTATED_CDS"/>
    <property type="molecule type" value="Genomic_DNA"/>
</dbReference>
<dbReference type="EMBL" id="AABR07058879">
    <property type="status" value="NOT_ANNOTATED_CDS"/>
    <property type="molecule type" value="Genomic_DNA"/>
</dbReference>
<dbReference type="EMBL" id="AABR07058880">
    <property type="status" value="NOT_ANNOTATED_CDS"/>
    <property type="molecule type" value="Genomic_DNA"/>
</dbReference>
<dbReference type="EMBL" id="AABR07058881">
    <property type="status" value="NOT_ANNOTATED_CDS"/>
    <property type="molecule type" value="Genomic_DNA"/>
</dbReference>
<dbReference type="EMBL" id="AABR07073547">
    <property type="status" value="NOT_ANNOTATED_CDS"/>
    <property type="molecule type" value="Genomic_DNA"/>
</dbReference>
<dbReference type="EMBL" id="CH474035">
    <property type="protein sequence ID" value="EDL86966.1"/>
    <property type="molecule type" value="Genomic_DNA"/>
</dbReference>
<dbReference type="RefSeq" id="NP_001178544.1">
    <property type="nucleotide sequence ID" value="NM_001191615.3"/>
</dbReference>
<dbReference type="RefSeq" id="XP_006257417.1">
    <property type="nucleotide sequence ID" value="XM_006257355.3"/>
</dbReference>
<dbReference type="SMR" id="F1LR10"/>
<dbReference type="FunCoup" id="F1LR10">
    <property type="interactions" value="1803"/>
</dbReference>
<dbReference type="IntAct" id="F1LR10">
    <property type="interactions" value="2"/>
</dbReference>
<dbReference type="STRING" id="10116.ENSRNOP00000072604"/>
<dbReference type="iPTMnet" id="F1LR10"/>
<dbReference type="PhosphoSitePlus" id="F1LR10"/>
<dbReference type="jPOST" id="F1LR10"/>
<dbReference type="PaxDb" id="10116-ENSRNOP00000063172"/>
<dbReference type="Ensembl" id="ENSRNOT00000091702.2">
    <property type="protein sequence ID" value="ENSRNOP00000072604.1"/>
    <property type="gene ID" value="ENSRNOG00000059801.2"/>
</dbReference>
<dbReference type="GeneID" id="300228"/>
<dbReference type="KEGG" id="rno:300228"/>
<dbReference type="AGR" id="RGD:1564050"/>
<dbReference type="CTD" id="51474"/>
<dbReference type="RGD" id="1564050">
    <property type="gene designation" value="Lima1"/>
</dbReference>
<dbReference type="eggNOG" id="KOG1700">
    <property type="taxonomic scope" value="Eukaryota"/>
</dbReference>
<dbReference type="GeneTree" id="ENSGT00940000158313"/>
<dbReference type="HOGENOM" id="CLU_021314_0_0_1"/>
<dbReference type="InParanoid" id="F1LR10"/>
<dbReference type="OrthoDB" id="6129702at2759"/>
<dbReference type="TreeFam" id="TF350273"/>
<dbReference type="PRO" id="PR:F1LR10"/>
<dbReference type="Proteomes" id="UP000002494">
    <property type="component" value="Chromosome 7"/>
</dbReference>
<dbReference type="Proteomes" id="UP000234681">
    <property type="component" value="Chromosome 7"/>
</dbReference>
<dbReference type="Bgee" id="ENSRNOG00000059801">
    <property type="expression patterns" value="Expressed in duodenum and 20 other cell types or tissues"/>
</dbReference>
<dbReference type="GO" id="GO:0015629">
    <property type="term" value="C:actin cytoskeleton"/>
    <property type="evidence" value="ECO:0000266"/>
    <property type="project" value="RGD"/>
</dbReference>
<dbReference type="GO" id="GO:0005884">
    <property type="term" value="C:actin filament"/>
    <property type="evidence" value="ECO:0000250"/>
    <property type="project" value="UniProtKB"/>
</dbReference>
<dbReference type="GO" id="GO:0005903">
    <property type="term" value="C:brush border"/>
    <property type="evidence" value="ECO:0000266"/>
    <property type="project" value="RGD"/>
</dbReference>
<dbReference type="GO" id="GO:0031526">
    <property type="term" value="C:brush border membrane"/>
    <property type="evidence" value="ECO:0000266"/>
    <property type="project" value="RGD"/>
</dbReference>
<dbReference type="GO" id="GO:0032154">
    <property type="term" value="C:cleavage furrow"/>
    <property type="evidence" value="ECO:0000266"/>
    <property type="project" value="RGD"/>
</dbReference>
<dbReference type="GO" id="GO:0005737">
    <property type="term" value="C:cytoplasm"/>
    <property type="evidence" value="ECO:0007669"/>
    <property type="project" value="UniProtKB-SubCell"/>
</dbReference>
<dbReference type="GO" id="GO:0005925">
    <property type="term" value="C:focal adhesion"/>
    <property type="evidence" value="ECO:0000250"/>
    <property type="project" value="UniProtKB"/>
</dbReference>
<dbReference type="GO" id="GO:0005886">
    <property type="term" value="C:plasma membrane"/>
    <property type="evidence" value="ECO:0000318"/>
    <property type="project" value="GO_Central"/>
</dbReference>
<dbReference type="GO" id="GO:0001726">
    <property type="term" value="C:ruffle"/>
    <property type="evidence" value="ECO:0000250"/>
    <property type="project" value="UniProtKB"/>
</dbReference>
<dbReference type="GO" id="GO:0001725">
    <property type="term" value="C:stress fiber"/>
    <property type="evidence" value="ECO:0000266"/>
    <property type="project" value="RGD"/>
</dbReference>
<dbReference type="GO" id="GO:0051015">
    <property type="term" value="F:actin filament binding"/>
    <property type="evidence" value="ECO:0000266"/>
    <property type="project" value="RGD"/>
</dbReference>
<dbReference type="GO" id="GO:0003785">
    <property type="term" value="F:actin monomer binding"/>
    <property type="evidence" value="ECO:0000266"/>
    <property type="project" value="RGD"/>
</dbReference>
<dbReference type="GO" id="GO:0046872">
    <property type="term" value="F:metal ion binding"/>
    <property type="evidence" value="ECO:0007669"/>
    <property type="project" value="UniProtKB-KW"/>
</dbReference>
<dbReference type="GO" id="GO:0051017">
    <property type="term" value="P:actin filament bundle assembly"/>
    <property type="evidence" value="ECO:0000250"/>
    <property type="project" value="UniProtKB"/>
</dbReference>
<dbReference type="GO" id="GO:0016477">
    <property type="term" value="P:cell migration"/>
    <property type="evidence" value="ECO:0000250"/>
    <property type="project" value="UniProtKB"/>
</dbReference>
<dbReference type="GO" id="GO:0042632">
    <property type="term" value="P:cholesterol homeostasis"/>
    <property type="evidence" value="ECO:0000266"/>
    <property type="project" value="RGD"/>
</dbReference>
<dbReference type="GO" id="GO:0008203">
    <property type="term" value="P:cholesterol metabolic process"/>
    <property type="evidence" value="ECO:0007669"/>
    <property type="project" value="UniProtKB-KW"/>
</dbReference>
<dbReference type="GO" id="GO:0030299">
    <property type="term" value="P:intestinal cholesterol absorption"/>
    <property type="evidence" value="ECO:0000266"/>
    <property type="project" value="RGD"/>
</dbReference>
<dbReference type="GO" id="GO:0030835">
    <property type="term" value="P:negative regulation of actin filament depolymerization"/>
    <property type="evidence" value="ECO:0000250"/>
    <property type="project" value="UniProtKB"/>
</dbReference>
<dbReference type="GO" id="GO:1902018">
    <property type="term" value="P:negative regulation of cilium assembly"/>
    <property type="evidence" value="ECO:0000250"/>
    <property type="project" value="UniProtKB"/>
</dbReference>
<dbReference type="GO" id="GO:0031529">
    <property type="term" value="P:ruffle organization"/>
    <property type="evidence" value="ECO:0000250"/>
    <property type="project" value="UniProtKB"/>
</dbReference>
<dbReference type="CDD" id="cd09485">
    <property type="entry name" value="LIM_Eplin_alpha_beta"/>
    <property type="match status" value="1"/>
</dbReference>
<dbReference type="FunFam" id="2.10.110.10:FF:000002">
    <property type="entry name" value="LIM domain and actin-binding 1"/>
    <property type="match status" value="1"/>
</dbReference>
<dbReference type="Gene3D" id="2.10.110.10">
    <property type="entry name" value="Cysteine Rich Protein"/>
    <property type="match status" value="1"/>
</dbReference>
<dbReference type="InterPro" id="IPR028740">
    <property type="entry name" value="EPLIN_Lim_dom"/>
</dbReference>
<dbReference type="InterPro" id="IPR001781">
    <property type="entry name" value="Znf_LIM"/>
</dbReference>
<dbReference type="PANTHER" id="PTHR24206">
    <property type="entry name" value="OS06G0237300 PROTEIN"/>
    <property type="match status" value="1"/>
</dbReference>
<dbReference type="Pfam" id="PF00412">
    <property type="entry name" value="LIM"/>
    <property type="match status" value="1"/>
</dbReference>
<dbReference type="SMART" id="SM00132">
    <property type="entry name" value="LIM"/>
    <property type="match status" value="1"/>
</dbReference>
<dbReference type="SUPFAM" id="SSF57716">
    <property type="entry name" value="Glucocorticoid receptor-like (DNA-binding domain)"/>
    <property type="match status" value="2"/>
</dbReference>
<dbReference type="PROSITE" id="PS00478">
    <property type="entry name" value="LIM_DOMAIN_1"/>
    <property type="match status" value="1"/>
</dbReference>
<dbReference type="PROSITE" id="PS50023">
    <property type="entry name" value="LIM_DOMAIN_2"/>
    <property type="match status" value="1"/>
</dbReference>
<sequence length="755" mass="83797">MESTPFNRRQWTSLSLRVTAKELSLVNKNKSSTIVEIFSKYQKAAEEANMERKKNNTESLPQHFRRGTLSVLKKKWENPVAGAESHTDSLPNSSSDGGHTADHPPAEVTAKAAPGARADREEHTQPRSRFGSRPEAVTQCRYPRSEDSHDFKAQATESQNMENCLGDSRHEAEKPEMSENTETSGKIEKYNVPLNRLKMMFEKGEHSQNKSPWTQGRNAGGRRLSENSCSLDDLEIGAGHLSSSAFNSEKNESKRNLELPRLSETSIKDRMAKYQAAVSKQSSPASYASELKPSESKTHKWEQKENVPPGPEACSIHQEGSKVSATENSLVAHPVPAEDDTCNSQGRSEAQQPIYTKPLSPDARTSSLPESSPSKTAKKFQAPARESCVECQKTVYPMERLLANQQVFHISCFRCSYCNNKLSLGTYASLHGRIYCKPHFNQLFKSKGNYDEGFGHKQHKDLWASKGENEETLGRPAQPPSAGETPHSPGVEDAPIAKVGVLAASMEAKASSQREREENKPAETKKLRIAWPPPAEQGSSGSAPEEGFKVSKPKWPPEDEVCKTEAPEDVDLDLKKLRRSSSLKERSRPFTVAASFRTSSVKSPKPLSPSLRKGWSEPEPEQSEEFGGGTVTQTESPRPSREKESVGKSRWQSEEAEAEAEEAPRGRDGRSFELESESFIGNGASIAEDDVAPAQRSPLEPESPGWPGFGDTTTAKEFNQKSQDVGFWEGEVVRELSVEEQIKRNRYYDEDEDEE</sequence>
<reference key="1">
    <citation type="journal article" date="2004" name="Nature">
        <title>Genome sequence of the Brown Norway rat yields insights into mammalian evolution.</title>
        <authorList>
            <person name="Gibbs R.A."/>
            <person name="Weinstock G.M."/>
            <person name="Metzker M.L."/>
            <person name="Muzny D.M."/>
            <person name="Sodergren E.J."/>
            <person name="Scherer S."/>
            <person name="Scott G."/>
            <person name="Steffen D."/>
            <person name="Worley K.C."/>
            <person name="Burch P.E."/>
            <person name="Okwuonu G."/>
            <person name="Hines S."/>
            <person name="Lewis L."/>
            <person name="Deramo C."/>
            <person name="Delgado O."/>
            <person name="Dugan-Rocha S."/>
            <person name="Miner G."/>
            <person name="Morgan M."/>
            <person name="Hawes A."/>
            <person name="Gill R."/>
            <person name="Holt R.A."/>
            <person name="Adams M.D."/>
            <person name="Amanatides P.G."/>
            <person name="Baden-Tillson H."/>
            <person name="Barnstead M."/>
            <person name="Chin S."/>
            <person name="Evans C.A."/>
            <person name="Ferriera S."/>
            <person name="Fosler C."/>
            <person name="Glodek A."/>
            <person name="Gu Z."/>
            <person name="Jennings D."/>
            <person name="Kraft C.L."/>
            <person name="Nguyen T."/>
            <person name="Pfannkoch C.M."/>
            <person name="Sitter C."/>
            <person name="Sutton G.G."/>
            <person name="Venter J.C."/>
            <person name="Woodage T."/>
            <person name="Smith D."/>
            <person name="Lee H.-M."/>
            <person name="Gustafson E."/>
            <person name="Cahill P."/>
            <person name="Kana A."/>
            <person name="Doucette-Stamm L."/>
            <person name="Weinstock K."/>
            <person name="Fechtel K."/>
            <person name="Weiss R.B."/>
            <person name="Dunn D.M."/>
            <person name="Green E.D."/>
            <person name="Blakesley R.W."/>
            <person name="Bouffard G.G."/>
            <person name="De Jong P.J."/>
            <person name="Osoegawa K."/>
            <person name="Zhu B."/>
            <person name="Marra M."/>
            <person name="Schein J."/>
            <person name="Bosdet I."/>
            <person name="Fjell C."/>
            <person name="Jones S."/>
            <person name="Krzywinski M."/>
            <person name="Mathewson C."/>
            <person name="Siddiqui A."/>
            <person name="Wye N."/>
            <person name="McPherson J."/>
            <person name="Zhao S."/>
            <person name="Fraser C.M."/>
            <person name="Shetty J."/>
            <person name="Shatsman S."/>
            <person name="Geer K."/>
            <person name="Chen Y."/>
            <person name="Abramzon S."/>
            <person name="Nierman W.C."/>
            <person name="Havlak P.H."/>
            <person name="Chen R."/>
            <person name="Durbin K.J."/>
            <person name="Egan A."/>
            <person name="Ren Y."/>
            <person name="Song X.-Z."/>
            <person name="Li B."/>
            <person name="Liu Y."/>
            <person name="Qin X."/>
            <person name="Cawley S."/>
            <person name="Cooney A.J."/>
            <person name="D'Souza L.M."/>
            <person name="Martin K."/>
            <person name="Wu J.Q."/>
            <person name="Gonzalez-Garay M.L."/>
            <person name="Jackson A.R."/>
            <person name="Kalafus K.J."/>
            <person name="McLeod M.P."/>
            <person name="Milosavljevic A."/>
            <person name="Virk D."/>
            <person name="Volkov A."/>
            <person name="Wheeler D.A."/>
            <person name="Zhang Z."/>
            <person name="Bailey J.A."/>
            <person name="Eichler E.E."/>
            <person name="Tuzun E."/>
            <person name="Birney E."/>
            <person name="Mongin E."/>
            <person name="Ureta-Vidal A."/>
            <person name="Woodwark C."/>
            <person name="Zdobnov E."/>
            <person name="Bork P."/>
            <person name="Suyama M."/>
            <person name="Torrents D."/>
            <person name="Alexandersson M."/>
            <person name="Trask B.J."/>
            <person name="Young J.M."/>
            <person name="Huang H."/>
            <person name="Wang H."/>
            <person name="Xing H."/>
            <person name="Daniels S."/>
            <person name="Gietzen D."/>
            <person name="Schmidt J."/>
            <person name="Stevens K."/>
            <person name="Vitt U."/>
            <person name="Wingrove J."/>
            <person name="Camara F."/>
            <person name="Mar Alba M."/>
            <person name="Abril J.F."/>
            <person name="Guigo R."/>
            <person name="Smit A."/>
            <person name="Dubchak I."/>
            <person name="Rubin E.M."/>
            <person name="Couronne O."/>
            <person name="Poliakov A."/>
            <person name="Huebner N."/>
            <person name="Ganten D."/>
            <person name="Goesele C."/>
            <person name="Hummel O."/>
            <person name="Kreitler T."/>
            <person name="Lee Y.-A."/>
            <person name="Monti J."/>
            <person name="Schulz H."/>
            <person name="Zimdahl H."/>
            <person name="Himmelbauer H."/>
            <person name="Lehrach H."/>
            <person name="Jacob H.J."/>
            <person name="Bromberg S."/>
            <person name="Gullings-Handley J."/>
            <person name="Jensen-Seaman M.I."/>
            <person name="Kwitek A.E."/>
            <person name="Lazar J."/>
            <person name="Pasko D."/>
            <person name="Tonellato P.J."/>
            <person name="Twigger S."/>
            <person name="Ponting C.P."/>
            <person name="Duarte J.M."/>
            <person name="Rice S."/>
            <person name="Goodstadt L."/>
            <person name="Beatson S.A."/>
            <person name="Emes R.D."/>
            <person name="Winter E.E."/>
            <person name="Webber C."/>
            <person name="Brandt P."/>
            <person name="Nyakatura G."/>
            <person name="Adetobi M."/>
            <person name="Chiaromonte F."/>
            <person name="Elnitski L."/>
            <person name="Eswara P."/>
            <person name="Hardison R.C."/>
            <person name="Hou M."/>
            <person name="Kolbe D."/>
            <person name="Makova K."/>
            <person name="Miller W."/>
            <person name="Nekrutenko A."/>
            <person name="Riemer C."/>
            <person name="Schwartz S."/>
            <person name="Taylor J."/>
            <person name="Yang S."/>
            <person name="Zhang Y."/>
            <person name="Lindpaintner K."/>
            <person name="Andrews T.D."/>
            <person name="Caccamo M."/>
            <person name="Clamp M."/>
            <person name="Clarke L."/>
            <person name="Curwen V."/>
            <person name="Durbin R.M."/>
            <person name="Eyras E."/>
            <person name="Searle S.M."/>
            <person name="Cooper G.M."/>
            <person name="Batzoglou S."/>
            <person name="Brudno M."/>
            <person name="Sidow A."/>
            <person name="Stone E.A."/>
            <person name="Payseur B.A."/>
            <person name="Bourque G."/>
            <person name="Lopez-Otin C."/>
            <person name="Puente X.S."/>
            <person name="Chakrabarti K."/>
            <person name="Chatterji S."/>
            <person name="Dewey C."/>
            <person name="Pachter L."/>
            <person name="Bray N."/>
            <person name="Yap V.B."/>
            <person name="Caspi A."/>
            <person name="Tesler G."/>
            <person name="Pevzner P.A."/>
            <person name="Haussler D."/>
            <person name="Roskin K.M."/>
            <person name="Baertsch R."/>
            <person name="Clawson H."/>
            <person name="Furey T.S."/>
            <person name="Hinrichs A.S."/>
            <person name="Karolchik D."/>
            <person name="Kent W.J."/>
            <person name="Rosenbloom K.R."/>
            <person name="Trumbower H."/>
            <person name="Weirauch M."/>
            <person name="Cooper D.N."/>
            <person name="Stenson P.D."/>
            <person name="Ma B."/>
            <person name="Brent M."/>
            <person name="Arumugam M."/>
            <person name="Shteynberg D."/>
            <person name="Copley R.R."/>
            <person name="Taylor M.S."/>
            <person name="Riethman H."/>
            <person name="Mudunuri U."/>
            <person name="Peterson J."/>
            <person name="Guyer M."/>
            <person name="Felsenfeld A."/>
            <person name="Old S."/>
            <person name="Mockrin S."/>
            <person name="Collins F.S."/>
        </authorList>
    </citation>
    <scope>NUCLEOTIDE SEQUENCE [LARGE SCALE GENOMIC DNA]</scope>
    <source>
        <strain>Brown Norway</strain>
    </source>
</reference>
<reference key="2">
    <citation type="submission" date="2005-09" db="EMBL/GenBank/DDBJ databases">
        <authorList>
            <person name="Mural R.J."/>
            <person name="Adams M.D."/>
            <person name="Myers E.W."/>
            <person name="Smith H.O."/>
            <person name="Venter J.C."/>
        </authorList>
    </citation>
    <scope>NUCLEOTIDE SEQUENCE [LARGE SCALE GENOMIC DNA]</scope>
</reference>
<reference evidence="7" key="3">
    <citation type="journal article" date="2006" name="Proc. Natl. Acad. Sci. U.S.A.">
        <title>Quantitative phosphoproteomics of vasopressin-sensitive renal cells: regulation of aquaporin-2 phosphorylation at two sites.</title>
        <authorList>
            <person name="Hoffert J.D."/>
            <person name="Pisitkun T."/>
            <person name="Wang G."/>
            <person name="Shen R.-F."/>
            <person name="Knepper M.A."/>
        </authorList>
    </citation>
    <scope>IDENTIFICATION BY MASS SPECTROMETRY [LARGE SCALE ANALYSIS]</scope>
</reference>
<reference evidence="8" key="4">
    <citation type="journal article" date="2012" name="Nat. Commun.">
        <title>Quantitative maps of protein phosphorylation sites across 14 different rat organs and tissues.</title>
        <authorList>
            <person name="Lundby A."/>
            <person name="Secher A."/>
            <person name="Lage K."/>
            <person name="Nordsborg N.B."/>
            <person name="Dmytriyev A."/>
            <person name="Lundby C."/>
            <person name="Olsen J.V."/>
        </authorList>
    </citation>
    <scope>IDENTIFICATION BY MASS SPECTROMETRY [LARGE SCALE ANALYSIS]</scope>
</reference>
<reference key="5">
    <citation type="journal article" date="2014" name="Kidney Int.">
        <title>Epithelial protein lost in neoplasm modulates platelet-derived growth factor-mediated adhesion and motility of mesangial cells.</title>
        <authorList>
            <person name="Tsurumi H."/>
            <person name="Harita Y."/>
            <person name="Kurihara H."/>
            <person name="Kosako H."/>
            <person name="Hayashi K."/>
            <person name="Matsunaga A."/>
            <person name="Kajiho Y."/>
            <person name="Kanda S."/>
            <person name="Miura K."/>
            <person name="Sekine T."/>
            <person name="Oka A."/>
            <person name="Ishizuka K."/>
            <person name="Horita S."/>
            <person name="Hattori M."/>
            <person name="Hattori S."/>
            <person name="Igarashi T."/>
        </authorList>
    </citation>
    <scope>TISSUE SPECIFICITY</scope>
</reference>
<name>LIMA1_RAT</name>
<organism>
    <name type="scientific">Rattus norvegicus</name>
    <name type="common">Rat</name>
    <dbReference type="NCBI Taxonomy" id="10116"/>
    <lineage>
        <taxon>Eukaryota</taxon>
        <taxon>Metazoa</taxon>
        <taxon>Chordata</taxon>
        <taxon>Craniata</taxon>
        <taxon>Vertebrata</taxon>
        <taxon>Euteleostomi</taxon>
        <taxon>Mammalia</taxon>
        <taxon>Eutheria</taxon>
        <taxon>Euarchontoglires</taxon>
        <taxon>Glires</taxon>
        <taxon>Rodentia</taxon>
        <taxon>Myomorpha</taxon>
        <taxon>Muroidea</taxon>
        <taxon>Muridae</taxon>
        <taxon>Murinae</taxon>
        <taxon>Rattus</taxon>
    </lineage>
</organism>
<accession>F1LR10</accession>
<accession>G3V8I6</accession>
<protein>
    <recommendedName>
        <fullName>LIM domain and actin-binding protein 1</fullName>
    </recommendedName>
    <alternativeName>
        <fullName>Epithelial protein lost in neoplasm</fullName>
    </alternativeName>
</protein>
<comment type="function">
    <text evidence="1 2">Actin-binding protein involved in actin cytoskeleton regulation and dynamics. Increases the number and size of actin stress fibers and inhibits membrane ruffling. Inhibits actin filament depolymerization. Bundles actin filaments, delays filament nucleation and reduces formation of branched filaments (By similarity). Acts as a negative regulator of primary cilium formation (By similarity). Plays a role in cholesterol homeostasis. Influences plasma cholesterol levels through regulation of intestinal cholesterol absorption. May act as a scaffold protein by regulating NPC1L1 transportation, an essential protein for cholesterol absorption, to the plasma membrane by recruiting MYO5B to NPC1L1, and thus facilitates cholesterol uptake (By similarity).</text>
</comment>
<comment type="subunit">
    <text evidence="1 2">Interacts with NPC1L1; bridges NPC1L1 with MYO5B. Interacts with MYO5B; bridges MYO5B with NPC1L1 (By similarity). Interacts with PXN; this complex stabilizes actin dynamics. Interacts with F-actin and G-actin (By similarity). Interacts with LUZP1 (via C-terminus); both proteins restrict ciliation and may work together to regulate this process (By similarity). Binds RAB40B (GTP-bound); interaction influences LIMA1 subcellular localization in lamellipodia during cell migration (By similarity).</text>
</comment>
<comment type="subcellular location">
    <subcellularLocation>
        <location evidence="2">Cytoplasm</location>
    </subcellularLocation>
    <subcellularLocation>
        <location evidence="2">Cell junction</location>
        <location evidence="2">Focal adhesion</location>
    </subcellularLocation>
    <subcellularLocation>
        <location evidence="2">Cytoplasm</location>
        <location evidence="2">Cytoskeleton</location>
    </subcellularLocation>
    <subcellularLocation>
        <location evidence="2">Cytoplasm</location>
        <location evidence="2">Cytoskeleton</location>
        <location evidence="2">Stress fiber</location>
    </subcellularLocation>
    <subcellularLocation>
        <location evidence="1">Cell membrane</location>
    </subcellularLocation>
    <subcellularLocation>
        <location evidence="2">Cell projection</location>
        <location evidence="2">Ruffle</location>
    </subcellularLocation>
    <subcellularLocation>
        <location evidence="2">Cell projection</location>
        <location evidence="2">Lamellipodium</location>
    </subcellularLocation>
    <text evidence="1 2">This cytoskeletal protein colocalizes with actin stress fibers and focal adhesion plaques. Expressed mainly in the brush border membrane of the small intestine and colocalizes with NPC1L1 and MYO5B (By similarity). Colocalizes with PXN at focal adhesions in mesangial cells (By similarity). Colocalizes with actin stress fibers in quiescent cells. PDGF stimulation induced disassembly of stress fibers and formation of peripheral and dorsal ruffles, where LIMA1 is relocalized (By similarity). Localized at the lamellipodia, just behind lamellipodia actin ruffles (By similarity).</text>
</comment>
<comment type="tissue specificity">
    <text evidence="5">Expressed throughout the kidney, including renal cortex, medulla, and glomeruli (PubMed:24694988). Expressed in glomeruli, tubular epithelial cells, and extraglomerular vascular endothelial cells (at protein level) (PubMed:24694988).</text>
</comment>
<comment type="PTM">
    <text evidence="1">Phosphorylation of the C-terminal region by MAPK1/MAPK3 reduces its association with F-actin and contributes to actin filament reorganization and enhanced cell motility.</text>
</comment>
<comment type="PTM">
    <text evidence="2">Ubiquitinated by the ECS(RAB40B) complex leading to its degradation.</text>
</comment>
<feature type="chain" id="PRO_0000445466" description="LIM domain and actin-binding protein 1">
    <location>
        <begin position="1"/>
        <end position="755"/>
    </location>
</feature>
<feature type="domain" description="LIM zinc-binding" evidence="3">
    <location>
        <begin position="386"/>
        <end position="446"/>
    </location>
</feature>
<feature type="region of interest" description="Disordered" evidence="4">
    <location>
        <begin position="43"/>
        <end position="151"/>
    </location>
</feature>
<feature type="region of interest" description="Disordered" evidence="4">
    <location>
        <begin position="168"/>
        <end position="226"/>
    </location>
</feature>
<feature type="region of interest" description="Disordered" evidence="4">
    <location>
        <begin position="241"/>
        <end position="379"/>
    </location>
</feature>
<feature type="region of interest" description="Disordered" evidence="4">
    <location>
        <begin position="468"/>
        <end position="493"/>
    </location>
</feature>
<feature type="region of interest" description="Required for interaction with MYO5B" evidence="1">
    <location>
        <begin position="491"/>
        <end position="511"/>
    </location>
</feature>
<feature type="region of interest" description="Disordered" evidence="4">
    <location>
        <begin position="505"/>
        <end position="714"/>
    </location>
</feature>
<feature type="short sequence motif" description="Required for interaction with NPC1L1" evidence="1">
    <location>
        <begin position="164"/>
        <end position="166"/>
    </location>
</feature>
<feature type="compositionally biased region" description="Basic and acidic residues" evidence="4">
    <location>
        <begin position="43"/>
        <end position="56"/>
    </location>
</feature>
<feature type="compositionally biased region" description="Polar residues" evidence="4">
    <location>
        <begin position="88"/>
        <end position="97"/>
    </location>
</feature>
<feature type="compositionally biased region" description="Basic and acidic residues" evidence="4">
    <location>
        <begin position="168"/>
        <end position="177"/>
    </location>
</feature>
<feature type="compositionally biased region" description="Basic and acidic residues" evidence="4">
    <location>
        <begin position="199"/>
        <end position="208"/>
    </location>
</feature>
<feature type="compositionally biased region" description="Basic and acidic residues" evidence="4">
    <location>
        <begin position="249"/>
        <end position="258"/>
    </location>
</feature>
<feature type="compositionally biased region" description="Basic and acidic residues" evidence="4">
    <location>
        <begin position="292"/>
        <end position="305"/>
    </location>
</feature>
<feature type="compositionally biased region" description="Polar residues" evidence="4">
    <location>
        <begin position="342"/>
        <end position="354"/>
    </location>
</feature>
<feature type="compositionally biased region" description="Polar residues" evidence="4">
    <location>
        <begin position="363"/>
        <end position="375"/>
    </location>
</feature>
<feature type="compositionally biased region" description="Basic and acidic residues" evidence="4">
    <location>
        <begin position="512"/>
        <end position="526"/>
    </location>
</feature>
<feature type="compositionally biased region" description="Basic and acidic residues" evidence="4">
    <location>
        <begin position="555"/>
        <end position="566"/>
    </location>
</feature>
<feature type="compositionally biased region" description="Low complexity" evidence="4">
    <location>
        <begin position="599"/>
        <end position="611"/>
    </location>
</feature>
<feature type="compositionally biased region" description="Basic and acidic residues" evidence="4">
    <location>
        <begin position="638"/>
        <end position="653"/>
    </location>
</feature>
<feature type="compositionally biased region" description="Basic and acidic residues" evidence="4">
    <location>
        <begin position="662"/>
        <end position="673"/>
    </location>
</feature>
<feature type="modified residue" description="N-acetylmethionine" evidence="2">
    <location>
        <position position="1"/>
    </location>
</feature>
<feature type="modified residue" description="Phosphoserine" evidence="2">
    <location>
        <position position="15"/>
    </location>
</feature>
<feature type="modified residue" description="Phosphoserine" evidence="1">
    <location>
        <position position="132"/>
    </location>
</feature>
<feature type="modified residue" description="Phosphoserine" evidence="1">
    <location>
        <position position="225"/>
    </location>
</feature>
<feature type="modified residue" description="Phosphoserine" evidence="1">
    <location>
        <position position="230"/>
    </location>
</feature>
<feature type="modified residue" description="Phosphoserine" evidence="1">
    <location>
        <position position="242"/>
    </location>
</feature>
<feature type="modified residue" description="Phosphoserine" evidence="2">
    <location>
        <position position="263"/>
    </location>
</feature>
<feature type="modified residue" description="Phosphoserine" evidence="2">
    <location>
        <position position="348"/>
    </location>
</feature>
<feature type="modified residue" description="Phosphoserine" evidence="1">
    <location>
        <position position="360"/>
    </location>
</feature>
<feature type="modified residue" description="Phosphoserine" evidence="2">
    <location>
        <position position="367"/>
    </location>
</feature>
<feature type="modified residue" description="Phosphoserine" evidence="2">
    <location>
        <position position="372"/>
    </location>
</feature>
<feature type="modified residue" description="N6-succinyllysine" evidence="1">
    <location>
        <position position="437"/>
    </location>
</feature>
<feature type="modified residue" description="Phosphoserine" evidence="1">
    <location>
        <position position="488"/>
    </location>
</feature>
<feature type="modified residue" description="Phosphoserine" evidence="2">
    <location>
        <position position="600"/>
    </location>
</feature>
<feature type="modified residue" description="Phosphoserine" evidence="1">
    <location>
        <position position="603"/>
    </location>
</feature>
<feature type="modified residue" description="Phosphoserine" evidence="2">
    <location>
        <position position="608"/>
    </location>
</feature>
<feature type="modified residue" description="Phosphoserine" evidence="1">
    <location>
        <position position="616"/>
    </location>
</feature>
<feature type="modified residue" description="Phosphoserine" evidence="1">
    <location>
        <position position="697"/>
    </location>
</feature>
<feature type="modified residue" description="Phosphoserine" evidence="1">
    <location>
        <position position="722"/>
    </location>
</feature>
<feature type="modified residue" description="Phosphoserine" evidence="1">
    <location>
        <position position="737"/>
    </location>
</feature>
<evidence type="ECO:0000250" key="1">
    <source>
        <dbReference type="UniProtKB" id="Q9ERG0"/>
    </source>
</evidence>
<evidence type="ECO:0000250" key="2">
    <source>
        <dbReference type="UniProtKB" id="Q9UHB6"/>
    </source>
</evidence>
<evidence type="ECO:0000255" key="3">
    <source>
        <dbReference type="PROSITE-ProRule" id="PRU00125"/>
    </source>
</evidence>
<evidence type="ECO:0000256" key="4">
    <source>
        <dbReference type="SAM" id="MobiDB-lite"/>
    </source>
</evidence>
<evidence type="ECO:0000269" key="5">
    <source>
    </source>
</evidence>
<evidence type="ECO:0000312" key="6">
    <source>
        <dbReference type="RGD" id="1564050"/>
    </source>
</evidence>
<evidence type="ECO:0007744" key="7">
    <source>
    </source>
</evidence>
<evidence type="ECO:0007744" key="8">
    <source>
    </source>
</evidence>